<comment type="function">
    <text evidence="1">Catalyzes the synthesis of activated sulfate.</text>
</comment>
<comment type="catalytic activity">
    <reaction evidence="1">
        <text>adenosine 5'-phosphosulfate + ATP = 3'-phosphoadenylyl sulfate + ADP + H(+)</text>
        <dbReference type="Rhea" id="RHEA:24152"/>
        <dbReference type="ChEBI" id="CHEBI:15378"/>
        <dbReference type="ChEBI" id="CHEBI:30616"/>
        <dbReference type="ChEBI" id="CHEBI:58243"/>
        <dbReference type="ChEBI" id="CHEBI:58339"/>
        <dbReference type="ChEBI" id="CHEBI:456216"/>
        <dbReference type="EC" id="2.7.1.25"/>
    </reaction>
</comment>
<comment type="pathway">
    <text evidence="1">Sulfur metabolism; hydrogen sulfide biosynthesis; sulfite from sulfate: step 2/3.</text>
</comment>
<comment type="similarity">
    <text evidence="1">Belongs to the APS kinase family.</text>
</comment>
<evidence type="ECO:0000255" key="1">
    <source>
        <dbReference type="HAMAP-Rule" id="MF_00065"/>
    </source>
</evidence>
<reference key="1">
    <citation type="journal article" date="2005" name="Nucleic Acids Res.">
        <title>Genome dynamics and diversity of Shigella species, the etiologic agents of bacillary dysentery.</title>
        <authorList>
            <person name="Yang F."/>
            <person name="Yang J."/>
            <person name="Zhang X."/>
            <person name="Chen L."/>
            <person name="Jiang Y."/>
            <person name="Yan Y."/>
            <person name="Tang X."/>
            <person name="Wang J."/>
            <person name="Xiong Z."/>
            <person name="Dong J."/>
            <person name="Xue Y."/>
            <person name="Zhu Y."/>
            <person name="Xu X."/>
            <person name="Sun L."/>
            <person name="Chen S."/>
            <person name="Nie H."/>
            <person name="Peng J."/>
            <person name="Xu J."/>
            <person name="Wang Y."/>
            <person name="Yuan Z."/>
            <person name="Wen Y."/>
            <person name="Yao Z."/>
            <person name="Shen Y."/>
            <person name="Qiang B."/>
            <person name="Hou Y."/>
            <person name="Yu J."/>
            <person name="Jin Q."/>
        </authorList>
    </citation>
    <scope>NUCLEOTIDE SEQUENCE [LARGE SCALE GENOMIC DNA]</scope>
    <source>
        <strain>Ss046</strain>
    </source>
</reference>
<feature type="chain" id="PRO_1000009035" description="Adenylyl-sulfate kinase">
    <location>
        <begin position="1"/>
        <end position="201"/>
    </location>
</feature>
<feature type="active site" description="Phosphoserine intermediate" evidence="1">
    <location>
        <position position="109"/>
    </location>
</feature>
<feature type="binding site" evidence="1">
    <location>
        <begin position="35"/>
        <end position="42"/>
    </location>
    <ligand>
        <name>ATP</name>
        <dbReference type="ChEBI" id="CHEBI:30616"/>
    </ligand>
</feature>
<accession>Q3YYB2</accession>
<dbReference type="EC" id="2.7.1.25" evidence="1"/>
<dbReference type="EMBL" id="CP000038">
    <property type="protein sequence ID" value="AAZ89500.1"/>
    <property type="molecule type" value="Genomic_DNA"/>
</dbReference>
<dbReference type="RefSeq" id="WP_001173673.1">
    <property type="nucleotide sequence ID" value="NC_007384.1"/>
</dbReference>
<dbReference type="SMR" id="Q3YYB2"/>
<dbReference type="GeneID" id="93779256"/>
<dbReference type="KEGG" id="ssn:SSON_2898"/>
<dbReference type="HOGENOM" id="CLU_046932_1_0_6"/>
<dbReference type="UniPathway" id="UPA00140">
    <property type="reaction ID" value="UER00205"/>
</dbReference>
<dbReference type="Proteomes" id="UP000002529">
    <property type="component" value="Chromosome"/>
</dbReference>
<dbReference type="GO" id="GO:0004020">
    <property type="term" value="F:adenylylsulfate kinase activity"/>
    <property type="evidence" value="ECO:0007669"/>
    <property type="project" value="UniProtKB-UniRule"/>
</dbReference>
<dbReference type="GO" id="GO:0005524">
    <property type="term" value="F:ATP binding"/>
    <property type="evidence" value="ECO:0007669"/>
    <property type="project" value="UniProtKB-UniRule"/>
</dbReference>
<dbReference type="GO" id="GO:0070814">
    <property type="term" value="P:hydrogen sulfide biosynthetic process"/>
    <property type="evidence" value="ECO:0007669"/>
    <property type="project" value="UniProtKB-UniRule"/>
</dbReference>
<dbReference type="GO" id="GO:0000103">
    <property type="term" value="P:sulfate assimilation"/>
    <property type="evidence" value="ECO:0007669"/>
    <property type="project" value="UniProtKB-UniRule"/>
</dbReference>
<dbReference type="CDD" id="cd02027">
    <property type="entry name" value="APSK"/>
    <property type="match status" value="1"/>
</dbReference>
<dbReference type="FunFam" id="3.40.50.300:FF:000212">
    <property type="entry name" value="Adenylyl-sulfate kinase"/>
    <property type="match status" value="1"/>
</dbReference>
<dbReference type="Gene3D" id="3.40.50.300">
    <property type="entry name" value="P-loop containing nucleotide triphosphate hydrolases"/>
    <property type="match status" value="1"/>
</dbReference>
<dbReference type="HAMAP" id="MF_00065">
    <property type="entry name" value="Adenylyl_sulf_kinase"/>
    <property type="match status" value="1"/>
</dbReference>
<dbReference type="InterPro" id="IPR002891">
    <property type="entry name" value="APS_kinase"/>
</dbReference>
<dbReference type="InterPro" id="IPR027417">
    <property type="entry name" value="P-loop_NTPase"/>
</dbReference>
<dbReference type="NCBIfam" id="TIGR00455">
    <property type="entry name" value="apsK"/>
    <property type="match status" value="1"/>
</dbReference>
<dbReference type="NCBIfam" id="NF003013">
    <property type="entry name" value="PRK03846.1"/>
    <property type="match status" value="1"/>
</dbReference>
<dbReference type="PANTHER" id="PTHR11055:SF63">
    <property type="entry name" value="ADENYLYL-SULFATE KINASE 1, CHLOROPLASTIC"/>
    <property type="match status" value="1"/>
</dbReference>
<dbReference type="PANTHER" id="PTHR11055">
    <property type="entry name" value="BIFUNCTIONAL 3'-PHOSPHOADENOSINE 5'-PHOSPHOSULFATE SYNTHASE"/>
    <property type="match status" value="1"/>
</dbReference>
<dbReference type="Pfam" id="PF01583">
    <property type="entry name" value="APS_kinase"/>
    <property type="match status" value="1"/>
</dbReference>
<dbReference type="SUPFAM" id="SSF52540">
    <property type="entry name" value="P-loop containing nucleoside triphosphate hydrolases"/>
    <property type="match status" value="1"/>
</dbReference>
<proteinExistence type="inferred from homology"/>
<sequence>MALHDENVVWHSHPVTVQQRELHHGHRGVVLWFTGLSGSGKSTVAGALEEALHKLGVSTYLLDGDNVRHGLCSDLGFSDADRKENIRRVGEVANLMVEAGLVVLTAFISPHRAERQMVRERVGEGRFIEVFVDTPLAICEARDPKGLYKKARAGELRNFTGIDSVYEAPESAEIHLNGEQLVTNLVQQLLDLLRQNDIIRS</sequence>
<keyword id="KW-0067">ATP-binding</keyword>
<keyword id="KW-0418">Kinase</keyword>
<keyword id="KW-0547">Nucleotide-binding</keyword>
<keyword id="KW-0597">Phosphoprotein</keyword>
<keyword id="KW-1185">Reference proteome</keyword>
<keyword id="KW-0808">Transferase</keyword>
<organism>
    <name type="scientific">Shigella sonnei (strain Ss046)</name>
    <dbReference type="NCBI Taxonomy" id="300269"/>
    <lineage>
        <taxon>Bacteria</taxon>
        <taxon>Pseudomonadati</taxon>
        <taxon>Pseudomonadota</taxon>
        <taxon>Gammaproteobacteria</taxon>
        <taxon>Enterobacterales</taxon>
        <taxon>Enterobacteriaceae</taxon>
        <taxon>Shigella</taxon>
    </lineage>
</organism>
<name>CYSC_SHISS</name>
<gene>
    <name evidence="1" type="primary">cysC</name>
    <name type="ordered locus">SSON_2898</name>
</gene>
<protein>
    <recommendedName>
        <fullName evidence="1">Adenylyl-sulfate kinase</fullName>
        <ecNumber evidence="1">2.7.1.25</ecNumber>
    </recommendedName>
    <alternativeName>
        <fullName evidence="1">APS kinase</fullName>
    </alternativeName>
    <alternativeName>
        <fullName evidence="1">ATP adenosine-5'-phosphosulfate 3'-phosphotransferase</fullName>
    </alternativeName>
    <alternativeName>
        <fullName evidence="1">Adenosine-5'-phosphosulfate kinase</fullName>
    </alternativeName>
</protein>